<accession>P36313</accession>
<accession>O12396</accession>
<organismHost>
    <name type="scientific">Homo sapiens</name>
    <name type="common">Human</name>
    <dbReference type="NCBI Taxonomy" id="9606"/>
</organismHost>
<dbReference type="EMBL" id="X14112">
    <property type="protein sequence ID" value="CAA32285.1"/>
    <property type="molecule type" value="Genomic_DNA"/>
</dbReference>
<dbReference type="EMBL" id="X14112">
    <property type="protein sequence ID" value="CAA32348.1"/>
    <property type="molecule type" value="Genomic_DNA"/>
</dbReference>
<dbReference type="PIR" id="JQ1682">
    <property type="entry name" value="JQ1682"/>
</dbReference>
<dbReference type="RefSeq" id="YP_009137073.1">
    <property type="nucleotide sequence ID" value="NC_001806.2"/>
</dbReference>
<dbReference type="RefSeq" id="YP_009137134.1">
    <property type="nucleotide sequence ID" value="NC_001806.2"/>
</dbReference>
<dbReference type="BioGRID" id="971431">
    <property type="interactions" value="16"/>
</dbReference>
<dbReference type="BioGRID" id="971432">
    <property type="interactions" value="1"/>
</dbReference>
<dbReference type="IntAct" id="P36313">
    <property type="interactions" value="13"/>
</dbReference>
<dbReference type="MINT" id="P36313"/>
<dbReference type="GeneID" id="2703395"/>
<dbReference type="GeneID" id="2703396"/>
<dbReference type="KEGG" id="vg:2703395"/>
<dbReference type="KEGG" id="vg:2703396"/>
<dbReference type="Proteomes" id="UP000009294">
    <property type="component" value="Segment"/>
</dbReference>
<dbReference type="GO" id="GO:0030430">
    <property type="term" value="C:host cell cytoplasm"/>
    <property type="evidence" value="ECO:0007669"/>
    <property type="project" value="UniProtKB-SubCell"/>
</dbReference>
<dbReference type="GO" id="GO:0044196">
    <property type="term" value="C:host cell nucleolus"/>
    <property type="evidence" value="ECO:0007669"/>
    <property type="project" value="UniProtKB-SubCell"/>
</dbReference>
<dbReference type="GO" id="GO:0044423">
    <property type="term" value="C:virion component"/>
    <property type="evidence" value="ECO:0007669"/>
    <property type="project" value="UniProtKB-KW"/>
</dbReference>
<dbReference type="GO" id="GO:0004865">
    <property type="term" value="F:protein serine/threonine phosphatase inhibitor activity"/>
    <property type="evidence" value="ECO:0007669"/>
    <property type="project" value="UniProtKB-KW"/>
</dbReference>
<dbReference type="GO" id="GO:0034976">
    <property type="term" value="P:response to endoplasmic reticulum stress"/>
    <property type="evidence" value="ECO:0007669"/>
    <property type="project" value="TreeGrafter"/>
</dbReference>
<dbReference type="GO" id="GO:0140321">
    <property type="term" value="P:symbiont-mediated suppression of host autophagy"/>
    <property type="evidence" value="ECO:0007669"/>
    <property type="project" value="UniProtKB-KW"/>
</dbReference>
<dbReference type="GO" id="GO:0039548">
    <property type="term" value="P:symbiont-mediated suppression of host cytoplasmic pattern recognition receptor signaling pathway via inhibition of IRF3 activity"/>
    <property type="evidence" value="ECO:0007669"/>
    <property type="project" value="UniProtKB-KW"/>
</dbReference>
<dbReference type="GO" id="GO:0039606">
    <property type="term" value="P:symbiont-mediated suppression of host translation initiation"/>
    <property type="evidence" value="ECO:0007669"/>
    <property type="project" value="UniProtKB-KW"/>
</dbReference>
<dbReference type="GO" id="GO:0039502">
    <property type="term" value="P:symbiont-mediated suppression of host type I interferon-mediated signaling pathway"/>
    <property type="evidence" value="ECO:0007669"/>
    <property type="project" value="UniProtKB-KW"/>
</dbReference>
<dbReference type="GO" id="GO:0141154">
    <property type="term" value="P:symbiont-mediated suppression of host-directed shutoff of host translation"/>
    <property type="evidence" value="ECO:0000269"/>
    <property type="project" value="SigSci"/>
</dbReference>
<dbReference type="InterPro" id="IPR051254">
    <property type="entry name" value="PPP1R15"/>
</dbReference>
<dbReference type="PANTHER" id="PTHR16489">
    <property type="entry name" value="GH11727P"/>
    <property type="match status" value="1"/>
</dbReference>
<dbReference type="PANTHER" id="PTHR16489:SF14">
    <property type="entry name" value="PROTEIN PHOSPHATASE 1 REGULATORY SUBUNIT 15A"/>
    <property type="match status" value="1"/>
</dbReference>
<comment type="function">
    <text evidence="2 4 5 6 7 8 9 10">Inhibits the establishment of the immune response and of the integrated stress response (ISR) in the infected cell (By similarity). Plays essential roles in viral nuclear egress to mediate capsid transit across the nuclear membrane (PubMed:25355318). Facilitates nuclear egress cooperatively with host C1QBP and protein kinase C/PKC to induce lamin A/C phosphorylation and subsequent reorganization (PubMed:25355318, PubMed:27630226). In turn, lamina disassembles and nuclear egress occurs (PubMed:27630226). Recruits the serine/threonine protein phosphatase PPP1CA/PP1-alpha to dephosphorylate the translation initiation factor EIF2S1/eIF-2alpha, thereby couteracting the host shutoff of protein synthesis involving double-stranded RNA-dependent protein kinase EIF2AK2/PKR (By similarity). In turn, controls host IRF3 activation and subsequently inhibits host interferon response (PubMed:28904192). Controls the DNA sensing pathway by interacting with and inhibiting host STING/TMEM173 (PubMed:30045990). Also down-modulates the host MHC class II proteins cell surface expression (By similarity). Acts as a neurovirulence factor that has a profound effect on the growth of the virus in central nervous system tissue, by interacting with host BECN1 and thereby antagonizing the host autophagy response (PubMed:18005679).</text>
</comment>
<comment type="subunit">
    <text evidence="2 4 5 6 7 8 11">Interacts with host PPP1CA; this interaction forms a high-molecular-weight complex that dephosphorylates EIF2S1/eIF-2alpha (By similarity). Interacts with host EIF2S1/eIF-2alpha; this interaction is crucial for the specific dephosphorylation of EIF2S1/eIF-2alpha by PPP1CA (PubMed:28904192). Binds to proliferating cell nuclear antigen (PCNA), which may release host cells from growth arrest and facilitate viral replication (PubMed:9371605). Interacts (via N-terminus) with host C1QBP; this interaction allows C1QBP to be recruited to the inner nuclear membrane by ICP34.5 (PubMed:25355318, PubMed:27630226, PubMed:28904192). Interacts with host PRKCA (PubMed:27630226). Interacts with protein UL31 (PubMed:27630226). Interacts with host STING/TMEM173; this interaction inhibits the intracellular DNA sensing pathway (PubMed:30045990). Interacts with host BECN1; this interaction modulates host autophagy (PubMed:18005679, PubMed:28904192).</text>
</comment>
<comment type="interaction">
    <interactant intactId="EBI-6149234">
        <id>P36313</id>
    </interactant>
    <interactant intactId="EBI-357253">
        <id>P62136</id>
        <label>PPP1CA</label>
    </interactant>
    <organismsDiffer>true</organismsDiffer>
    <experiments>4</experiments>
</comment>
<comment type="subcellular location">
    <subcellularLocation>
        <location evidence="2">Host cytoplasm</location>
    </subcellularLocation>
    <subcellularLocation>
        <location evidence="2">Host nucleus</location>
    </subcellularLocation>
    <subcellularLocation>
        <location evidence="2">Host nucleus</location>
        <location evidence="2">Host nucleolus</location>
    </subcellularLocation>
    <subcellularLocation>
        <location evidence="2">Virion</location>
    </subcellularLocation>
    <text evidence="2">At early times in infection, colocalizes with PCNA and replication proteins in the host cell nucleus, before accumulating in the host cytoplasm by 8 to 12 hours post-infection.</text>
</comment>
<comment type="domain">
    <text evidence="1">The triplet repeats region may play a role in modulating virus egress.</text>
</comment>
<comment type="miscellaneous">
    <text>ICP34.5 is detected as early as 3 hpi prior to viral replication but reaches maximal levels late in infection. ICP34.5 gene is therefore classified as gamma-1 or leaky late gene.</text>
</comment>
<comment type="miscellaneous">
    <text evidence="1">The phosphatase activity of the ICP34.5-PP1 complex toward EIF2S1 is specifically inhibited by Salubrinal, which inhibits viral replication.</text>
</comment>
<comment type="similarity">
    <text evidence="12">Belongs to the PPP1R15 family.</text>
</comment>
<protein>
    <recommendedName>
        <fullName>Neurovirulence factor ICP34.5</fullName>
    </recommendedName>
    <alternativeName>
        <fullName>Infected cell protein 34.5</fullName>
    </alternativeName>
    <alternativeName>
        <fullName>protein gamma(1)34.5</fullName>
    </alternativeName>
</protein>
<sequence length="248" mass="26196">MARRRRHRGPRRPRPPGPTGAVPTAQSQVTSTPNSEPAVRSAPAAAPPPPPAGGPPPSCSLLLRQWLHVPESASDDDDDDDWPDSPPPEPAPEARPTAAAPRPRPPPPGVGPGGGADPSHPPSRPFRLPPRLALRLRVTAEHLARLRLRRAGGEGAPEPPATPATPATPATPATPARVRFSPHVRVRHLVVWASAARLARRGSWARERADRARFRRRVAEAEAVIGPCLGPEARARALARGAGPANSV</sequence>
<gene>
    <name type="primary">ICP34.5</name>
    <name type="synonym">RL1</name>
</gene>
<keyword id="KW-1035">Host cytoplasm</keyword>
<keyword id="KW-1048">Host nucleus</keyword>
<keyword id="KW-0945">Host-virus interaction</keyword>
<keyword id="KW-1083">Inhibition of host autophagy by virus</keyword>
<keyword id="KW-1090">Inhibition of host innate immune response by virus</keyword>
<keyword id="KW-1114">Inhibition of host interferon signaling pathway by virus</keyword>
<keyword id="KW-1092">Inhibition of host IRF3 by virus</keyword>
<keyword id="KW-1113">Inhibition of host RLR pathway by virus</keyword>
<keyword id="KW-0922">Interferon antiviral system evasion</keyword>
<keyword id="KW-1126">Modulation of host PP1 activity by virus</keyword>
<keyword id="KW-1185">Reference proteome</keyword>
<keyword id="KW-0677">Repeat</keyword>
<keyword id="KW-0899">Viral immunoevasion</keyword>
<keyword id="KW-0946">Virion</keyword>
<keyword id="KW-0843">Virulence</keyword>
<organism>
    <name type="scientific">Human herpesvirus 1 (strain 17)</name>
    <name type="common">HHV-1</name>
    <name type="synonym">Human herpes simplex virus 1</name>
    <dbReference type="NCBI Taxonomy" id="10299"/>
    <lineage>
        <taxon>Viruses</taxon>
        <taxon>Duplodnaviria</taxon>
        <taxon>Heunggongvirae</taxon>
        <taxon>Peploviricota</taxon>
        <taxon>Herviviricetes</taxon>
        <taxon>Herpesvirales</taxon>
        <taxon>Orthoherpesviridae</taxon>
        <taxon>Alphaherpesvirinae</taxon>
        <taxon>Simplexvirus</taxon>
        <taxon>Simplexvirus humanalpha1</taxon>
        <taxon>Human herpesvirus 1</taxon>
    </lineage>
</organism>
<evidence type="ECO:0000250" key="1"/>
<evidence type="ECO:0000250" key="2">
    <source>
        <dbReference type="UniProtKB" id="P08353"/>
    </source>
</evidence>
<evidence type="ECO:0000256" key="3">
    <source>
        <dbReference type="SAM" id="MobiDB-lite"/>
    </source>
</evidence>
<evidence type="ECO:0000269" key="4">
    <source>
    </source>
</evidence>
<evidence type="ECO:0000269" key="5">
    <source>
    </source>
</evidence>
<evidence type="ECO:0000269" key="6">
    <source>
    </source>
</evidence>
<evidence type="ECO:0000269" key="7">
    <source>
    </source>
</evidence>
<evidence type="ECO:0000269" key="8">
    <source>
    </source>
</evidence>
<evidence type="ECO:0000269" key="9">
    <source>
    </source>
</evidence>
<evidence type="ECO:0000269" key="10">
    <source>
    </source>
</evidence>
<evidence type="ECO:0000269" key="11">
    <source>
    </source>
</evidence>
<evidence type="ECO:0000305" key="12"/>
<name>ICP34_HHV11</name>
<proteinExistence type="evidence at protein level"/>
<reference key="1">
    <citation type="journal article" date="1988" name="J. Gen. Virol.">
        <title>The complete DNA sequence of the long unique region in the genome of herpes simplex virus type 1.</title>
        <authorList>
            <person name="McGeoch D.J."/>
            <person name="Dalrymple M.A."/>
            <person name="Davison A.J."/>
            <person name="Dolan A."/>
            <person name="Frame M.C."/>
            <person name="McNab D."/>
            <person name="Perry L.J."/>
            <person name="Scott J.E."/>
            <person name="Taylor P."/>
        </authorList>
    </citation>
    <scope>NUCLEOTIDE SEQUENCE [GENOMIC DNA]</scope>
</reference>
<reference key="2">
    <citation type="journal article" date="1992" name="J. Gen. Virol.">
        <title>Status of the ICP34.5 gene in herpes simplex virus type 1 strain 17.</title>
        <authorList>
            <person name="Dolan A."/>
            <person name="McKie E."/>
            <person name="MacLean A.R."/>
            <person name="McGeoch D.J."/>
        </authorList>
    </citation>
    <scope>SEQUENCE REVISION</scope>
</reference>
<reference key="3">
    <citation type="journal article" date="1988" name="J. Gen. Virol.">
        <title>The DNA sequences of the long repeat region and adjoining parts of the long unique region in the genome of herpes simplex virus type 1.</title>
        <authorList>
            <person name="Perry L.J."/>
            <person name="McGeoch D.J."/>
        </authorList>
    </citation>
    <scope>NUCLEOTIDE SEQUENCE [GENOMIC DNA]</scope>
</reference>
<reference key="4">
    <citation type="journal article" date="1994" name="J. Gen. Virol.">
        <title>Cell type and cell state determine differential in vitro growth of non-neurovirulent ICP34.5-negative herpes simplex virus types 1 and 2.</title>
        <authorList>
            <person name="Brown S.M."/>
            <person name="Harland J."/>
            <person name="MacLean A.R."/>
            <person name="Podlech J."/>
            <person name="Clements J.B."/>
        </authorList>
    </citation>
    <scope>FUNCTION</scope>
    <source>
        <strain>17syn+</strain>
        <strain>17termA</strain>
    </source>
</reference>
<reference key="5">
    <citation type="journal article" date="1994" name="J. Gen. Virol.">
        <title>ICP34.5 influences herpes simplex virus type 1 maturation and egress from infected cells in vitro.</title>
        <authorList>
            <person name="Brown S.M."/>
            <person name="MacLean A.R."/>
            <person name="Aitken J.D."/>
            <person name="Harland J."/>
        </authorList>
    </citation>
    <scope>FUNCTION</scope>
</reference>
<reference key="6">
    <citation type="journal article" date="1997" name="J. Virol.">
        <title>The herpes simplex virus virulence factor ICP34.5 and the cellular protein MyD116 complex with proliferating cell nuclear antigen through the 63-amino-acid domain conserved in ICP34.5, MyD116, and GADD34.</title>
        <authorList>
            <person name="Brown S.M."/>
            <person name="MacLean A.R."/>
            <person name="McKie E.A."/>
            <person name="Harland J."/>
        </authorList>
    </citation>
    <scope>INTERACTION WITH PCNA</scope>
</reference>
<reference key="7">
    <citation type="journal article" date="2007" name="Cell Host Microbe">
        <title>HSV-1 ICP34.5 confers neurovirulence by targeting the Beclin 1 autophagy protein.</title>
        <authorList>
            <person name="Orvedahl A."/>
            <person name="Alexander D."/>
            <person name="Talloczy Z."/>
            <person name="Sun Q."/>
            <person name="Wei Y."/>
            <person name="Zhang W."/>
            <person name="Burns D."/>
            <person name="Leib D.A."/>
            <person name="Levine B."/>
        </authorList>
    </citation>
    <scope>FUNCTION</scope>
    <scope>INTERACTION WITH HOST BECN1</scope>
</reference>
<reference key="8">
    <citation type="journal article" date="2014" name="J. Biol. Chem.">
        <title>p32 is a novel target for viral protein ICP34.5 of herpes simplex virus type 1 and facilitates viral nuclear egress.</title>
        <authorList>
            <person name="Wang Y."/>
            <person name="Yang Y."/>
            <person name="Wu S."/>
            <person name="Pan S."/>
            <person name="Zhou C."/>
            <person name="Ma Y."/>
            <person name="Ru Y."/>
            <person name="Dong S."/>
            <person name="He B."/>
            <person name="Zhang C."/>
            <person name="Cao Y."/>
        </authorList>
    </citation>
    <scope>INTERACTION WITH HOST C1QBP</scope>
    <scope>FUNCTION</scope>
</reference>
<reference key="9">
    <citation type="journal article" date="2016" name="J. Virol.">
        <title>Herpes Simplex Virus 1 Induces Phosphorylation and Reorganization of Lamin A/C through the gamma134.5 Protein That Facilitates Nuclear Egress.</title>
        <authorList>
            <person name="Wu S."/>
            <person name="Pan S."/>
            <person name="Zhang L."/>
            <person name="Baines J."/>
            <person name="Roller R."/>
            <person name="Ames J."/>
            <person name="Yang M."/>
            <person name="Wang J."/>
            <person name="Chen D."/>
            <person name="Liu Y."/>
            <person name="Zhang C."/>
            <person name="Cao Y."/>
            <person name="He B."/>
        </authorList>
    </citation>
    <scope>FUNCTION</scope>
    <scope>INTERACTION WITH HOST UL31</scope>
    <scope>INTERACTION WITH HOST C1QBP</scope>
    <scope>INTERACTION WITH HOST PRKCA</scope>
</reference>
<reference key="10">
    <citation type="journal article" date="2017" name="J. Virol.">
        <title>Role of Herpes Simplex Virus 1 gamma34.5 in the Regulation of IRF3 Signaling.</title>
        <authorList>
            <person name="Manivanh R."/>
            <person name="Mehrbach J."/>
            <person name="Knipe D.M."/>
            <person name="Leib D.A."/>
        </authorList>
    </citation>
    <scope>FUNCTION</scope>
    <scope>INTERACTION WITH HOST BECN1</scope>
    <scope>INTERACTION WITH HOST C1QBP</scope>
    <scope>INTERACTION WITH HOST PPP1CA</scope>
    <scope>INTERACTION WITH HOST EIF2AK2/PKR</scope>
</reference>
<reference key="11">
    <citation type="journal article" date="2018" name="J. Virol.">
        <title>34.5 Protein Inhibits STING Activation That Restricts Viral Replication.</title>
        <authorList>
            <person name="Pan S."/>
            <person name="Liu X."/>
            <person name="Ma Y."/>
            <person name="Cao Y."/>
            <person name="He B."/>
        </authorList>
    </citation>
    <scope>FUNCTION</scope>
    <scope>INTERACTION WITH HOST STING/TMEM173</scope>
</reference>
<feature type="chain" id="PRO_0000115806" description="Neurovirulence factor ICP34.5">
    <location>
        <begin position="1"/>
        <end position="248"/>
    </location>
</feature>
<feature type="repeat" description="1">
    <location>
        <begin position="161"/>
        <end position="163"/>
    </location>
</feature>
<feature type="repeat" description="2">
    <location>
        <begin position="164"/>
        <end position="166"/>
    </location>
</feature>
<feature type="repeat" description="3">
    <location>
        <begin position="167"/>
        <end position="169"/>
    </location>
</feature>
<feature type="repeat" description="4">
    <location>
        <begin position="170"/>
        <end position="172"/>
    </location>
</feature>
<feature type="repeat" description="5">
    <location>
        <begin position="173"/>
        <end position="175"/>
    </location>
</feature>
<feature type="region of interest" description="Disordered" evidence="3">
    <location>
        <begin position="1"/>
        <end position="129"/>
    </location>
</feature>
<feature type="region of interest" description="Required for nucleolar localization" evidence="2">
    <location>
        <begin position="1"/>
        <end position="16"/>
    </location>
</feature>
<feature type="region of interest" description="Disordered" evidence="3">
    <location>
        <begin position="149"/>
        <end position="174"/>
    </location>
</feature>
<feature type="region of interest" description="5 X 3 AA tandem repeats of A-T-P">
    <location>
        <begin position="161"/>
        <end position="175"/>
    </location>
</feature>
<feature type="region of interest" description="Binding to PP1CA" evidence="2">
    <location>
        <begin position="175"/>
        <end position="188"/>
    </location>
</feature>
<feature type="region of interest" description="Interaction with host PPP1CA" evidence="2">
    <location>
        <begin position="175"/>
        <end position="188"/>
    </location>
</feature>
<feature type="region of interest" description="Important for interferon resistance" evidence="2">
    <location>
        <begin position="190"/>
        <end position="248"/>
    </location>
</feature>
<feature type="region of interest" description="Interaction with host EIF2S1/EIF-2ALPHA" evidence="2">
    <location>
        <begin position="218"/>
        <end position="233"/>
    </location>
</feature>
<feature type="short sequence motif" description="Nuclear export signal" evidence="2">
    <location>
        <begin position="128"/>
        <end position="137"/>
    </location>
</feature>
<feature type="short sequence motif" description="Bipartite nuclear localization signal" evidence="2">
    <location>
        <begin position="200"/>
        <end position="218"/>
    </location>
</feature>
<feature type="compositionally biased region" description="Basic residues" evidence="3">
    <location>
        <begin position="1"/>
        <end position="14"/>
    </location>
</feature>
<feature type="compositionally biased region" description="Polar residues" evidence="3">
    <location>
        <begin position="24"/>
        <end position="35"/>
    </location>
</feature>
<feature type="compositionally biased region" description="Pro residues" evidence="3">
    <location>
        <begin position="45"/>
        <end position="58"/>
    </location>
</feature>
<feature type="compositionally biased region" description="Acidic residues" evidence="3">
    <location>
        <begin position="73"/>
        <end position="83"/>
    </location>
</feature>
<feature type="compositionally biased region" description="Pro residues" evidence="3">
    <location>
        <begin position="84"/>
        <end position="93"/>
    </location>
</feature>
<feature type="compositionally biased region" description="Pro residues" evidence="3">
    <location>
        <begin position="119"/>
        <end position="128"/>
    </location>
</feature>
<feature type="compositionally biased region" description="Low complexity" evidence="3">
    <location>
        <begin position="164"/>
        <end position="174"/>
    </location>
</feature>